<proteinExistence type="evidence at protein level"/>
<accession>C0CMQ8</accession>
<sequence length="322" mass="35325">MKIVVLDGYCLNPGDLDWKGLEALGECIVYDRTSLTDMEEVISRIGDADIVYTNKTPMPREVFEKCPNIRFVGVLATGYNVVDVNTAKEKGIPVANIPTYGTASVGQFAIALLLEICHHVGHHNQVVHEGKWESNPDWCFWDYPLIELDGKNMGIIGYGRIGQATGKIAQALGMKVLAYDAYKNPALENENCRYVELDELLSQSDVIALHCPLFPETEGIVNKENIAKMKDGVIILNNSRGPLIVEQDLVDALNSGKVAAAGLDVVSTEPIKGDNPLLGAKNCIITPHISWAPKESRKRLMDIAVNNLEEFLKGSPVNVVNK</sequence>
<protein>
    <recommendedName>
        <fullName evidence="3">Hydroxypyruvate reductase</fullName>
        <ecNumber evidence="2">1.1.1.81</ecNumber>
    </recommendedName>
</protein>
<dbReference type="EC" id="1.1.1.81" evidence="2"/>
<dbReference type="EMBL" id="ACBZ01000114">
    <property type="protein sequence ID" value="EEG48953.1"/>
    <property type="molecule type" value="Genomic_DNA"/>
</dbReference>
<dbReference type="RefSeq" id="WP_005949244.1">
    <property type="nucleotide sequence ID" value="NZ_CP136423.1"/>
</dbReference>
<dbReference type="SMR" id="C0CMQ8"/>
<dbReference type="GeneID" id="86820931"/>
<dbReference type="PATRIC" id="fig|476272.21.peg.1575"/>
<dbReference type="eggNOG" id="COG1052">
    <property type="taxonomic scope" value="Bacteria"/>
</dbReference>
<dbReference type="HOGENOM" id="CLU_019796_1_3_9"/>
<dbReference type="SABIO-RK" id="C0CMQ8"/>
<dbReference type="Proteomes" id="UP000003100">
    <property type="component" value="Unassembled WGS sequence"/>
</dbReference>
<dbReference type="GO" id="GO:0008465">
    <property type="term" value="F:hydroxypyruvate reductase (NADH) activity"/>
    <property type="evidence" value="ECO:0007669"/>
    <property type="project" value="RHEA"/>
</dbReference>
<dbReference type="GO" id="GO:0051287">
    <property type="term" value="F:NAD binding"/>
    <property type="evidence" value="ECO:0007669"/>
    <property type="project" value="InterPro"/>
</dbReference>
<dbReference type="CDD" id="cd12162">
    <property type="entry name" value="2-Hacid_dh_4"/>
    <property type="match status" value="1"/>
</dbReference>
<dbReference type="FunFam" id="3.40.50.720:FF:000203">
    <property type="entry name" value="D-3-phosphoglycerate dehydrogenase (SerA)"/>
    <property type="match status" value="1"/>
</dbReference>
<dbReference type="Gene3D" id="3.40.50.720">
    <property type="entry name" value="NAD(P)-binding Rossmann-like Domain"/>
    <property type="match status" value="2"/>
</dbReference>
<dbReference type="InterPro" id="IPR050418">
    <property type="entry name" value="D-iso_2-hydroxyacid_DH_PdxB"/>
</dbReference>
<dbReference type="InterPro" id="IPR006139">
    <property type="entry name" value="D-isomer_2_OHA_DH_cat_dom"/>
</dbReference>
<dbReference type="InterPro" id="IPR029753">
    <property type="entry name" value="D-isomer_DH_CS"/>
</dbReference>
<dbReference type="InterPro" id="IPR029752">
    <property type="entry name" value="D-isomer_DH_CS1"/>
</dbReference>
<dbReference type="InterPro" id="IPR006140">
    <property type="entry name" value="D-isomer_DH_NAD-bd"/>
</dbReference>
<dbReference type="InterPro" id="IPR036291">
    <property type="entry name" value="NAD(P)-bd_dom_sf"/>
</dbReference>
<dbReference type="PANTHER" id="PTHR43761:SF1">
    <property type="entry name" value="D-ISOMER SPECIFIC 2-HYDROXYACID DEHYDROGENASE CATALYTIC DOMAIN-CONTAINING PROTEIN-RELATED"/>
    <property type="match status" value="1"/>
</dbReference>
<dbReference type="PANTHER" id="PTHR43761">
    <property type="entry name" value="D-ISOMER SPECIFIC 2-HYDROXYACID DEHYDROGENASE FAMILY PROTEIN (AFU_ORTHOLOGUE AFUA_1G13630)"/>
    <property type="match status" value="1"/>
</dbReference>
<dbReference type="Pfam" id="PF00389">
    <property type="entry name" value="2-Hacid_dh"/>
    <property type="match status" value="1"/>
</dbReference>
<dbReference type="Pfam" id="PF02826">
    <property type="entry name" value="2-Hacid_dh_C"/>
    <property type="match status" value="1"/>
</dbReference>
<dbReference type="SUPFAM" id="SSF52283">
    <property type="entry name" value="Formate/glycerate dehydrogenase catalytic domain-like"/>
    <property type="match status" value="1"/>
</dbReference>
<dbReference type="SUPFAM" id="SSF51735">
    <property type="entry name" value="NAD(P)-binding Rossmann-fold domains"/>
    <property type="match status" value="1"/>
</dbReference>
<dbReference type="PROSITE" id="PS00065">
    <property type="entry name" value="D_2_HYDROXYACID_DH_1"/>
    <property type="match status" value="1"/>
</dbReference>
<dbReference type="PROSITE" id="PS00670">
    <property type="entry name" value="D_2_HYDROXYACID_DH_2"/>
    <property type="match status" value="1"/>
</dbReference>
<dbReference type="PROSITE" id="PS00671">
    <property type="entry name" value="D_2_HYDROXYACID_DH_3"/>
    <property type="match status" value="1"/>
</dbReference>
<evidence type="ECO:0000250" key="1">
    <source>
        <dbReference type="UniProtKB" id="P26297"/>
    </source>
</evidence>
<evidence type="ECO:0000269" key="2">
    <source>
    </source>
</evidence>
<evidence type="ECO:0000303" key="3">
    <source>
    </source>
</evidence>
<evidence type="ECO:0000303" key="4">
    <source ref="2"/>
</evidence>
<evidence type="ECO:0000305" key="5"/>
<evidence type="ECO:0000312" key="6">
    <source>
        <dbReference type="EMBL" id="EEG48953.1"/>
    </source>
</evidence>
<reference key="1">
    <citation type="submission" date="2009-01" db="EMBL/GenBank/DDBJ databases">
        <authorList>
            <person name="Fulton L."/>
            <person name="Clifton S."/>
            <person name="Fulton B."/>
            <person name="Xu J."/>
            <person name="Minx P."/>
            <person name="Pepin K.H."/>
            <person name="Johnson M."/>
            <person name="Bhonagiri V."/>
            <person name="Nash W.E."/>
            <person name="Mardis E.R."/>
            <person name="Wilson R.K."/>
        </authorList>
    </citation>
    <scope>NUCLEOTIDE SEQUENCE [LARGE SCALE GENOMIC DNA]</scope>
    <source>
        <strain>DSM 10507 / JCM 14656 / S5a33</strain>
    </source>
</reference>
<reference key="2">
    <citation type="submission" date="2009-02" db="EMBL/GenBank/DDBJ databases">
        <title>Draft genome sequence of Blautia hydrogenotrophica DSM 10507 (Ruminococcus hydrogenotrophicus DSM 10507).</title>
        <authorList>
            <person name="Sudarsanam P."/>
            <person name="Ley R."/>
            <person name="Guruge J."/>
            <person name="Turnbaugh P.J."/>
            <person name="Mahowald M."/>
            <person name="Liep D."/>
            <person name="Gordon J."/>
        </authorList>
    </citation>
    <scope>NUCLEOTIDE SEQUENCE [LARGE SCALE GENOMIC DNA]</scope>
    <source>
        <strain>DSM 10507 / JCM 14656 / S5a33</strain>
    </source>
</reference>
<reference key="3">
    <citation type="journal article" date="2018" name="Nat. Chem. Biol.">
        <title>Functional assignment of multiple catabolic pathways for D-apiose.</title>
        <authorList>
            <person name="Carter M.S."/>
            <person name="Zhang X."/>
            <person name="Huang H."/>
            <person name="Bouvier J.T."/>
            <person name="Francisco B.S."/>
            <person name="Vetting M.W."/>
            <person name="Al-Obaidi N."/>
            <person name="Bonanno J.B."/>
            <person name="Ghosh A."/>
            <person name="Zallot R.G."/>
            <person name="Andersen H.M."/>
            <person name="Almo S.C."/>
            <person name="Gerlt J.A."/>
        </authorList>
    </citation>
    <scope>FUNCTION</scope>
    <scope>CATALYTIC ACTIVITY</scope>
    <scope>BIOPHYSICOCHEMICAL PROPERTIES</scope>
    <scope>PATHWAY</scope>
</reference>
<name>HPR_BLAHS</name>
<feature type="chain" id="PRO_0000446041" description="Hydroxypyruvate reductase">
    <location>
        <begin position="1"/>
        <end position="322"/>
    </location>
</feature>
<feature type="active site" evidence="1">
    <location>
        <position position="240"/>
    </location>
</feature>
<feature type="active site" evidence="1">
    <location>
        <position position="269"/>
    </location>
</feature>
<feature type="active site" description="Proton donor" evidence="1">
    <location>
        <position position="288"/>
    </location>
</feature>
<feature type="binding site" evidence="1">
    <location>
        <begin position="160"/>
        <end position="161"/>
    </location>
    <ligand>
        <name>NAD(+)</name>
        <dbReference type="ChEBI" id="CHEBI:57540"/>
    </ligand>
</feature>
<feature type="binding site" evidence="1">
    <location>
        <position position="180"/>
    </location>
    <ligand>
        <name>NAD(+)</name>
        <dbReference type="ChEBI" id="CHEBI:57540"/>
    </ligand>
</feature>
<feature type="binding site" evidence="1">
    <location>
        <begin position="211"/>
        <end position="212"/>
    </location>
    <ligand>
        <name>NAD(+)</name>
        <dbReference type="ChEBI" id="CHEBI:57540"/>
    </ligand>
</feature>
<feature type="binding site" evidence="1">
    <location>
        <begin position="238"/>
        <end position="240"/>
    </location>
    <ligand>
        <name>NAD(+)</name>
        <dbReference type="ChEBI" id="CHEBI:57540"/>
    </ligand>
</feature>
<feature type="binding site" evidence="1">
    <location>
        <position position="264"/>
    </location>
    <ligand>
        <name>NAD(+)</name>
        <dbReference type="ChEBI" id="CHEBI:57540"/>
    </ligand>
</feature>
<gene>
    <name evidence="4" type="primary">hpr</name>
    <name evidence="6" type="ORF">RUMHYD_02143</name>
</gene>
<comment type="function">
    <text evidence="2">Involved in catabolism of D-apiose. Catalyzes the reduction of 3-hydroxypyruvate to glycerate.</text>
</comment>
<comment type="catalytic activity">
    <reaction evidence="2">
        <text>(R)-glycerate + NAD(+) = 3-hydroxypyruvate + NADH + H(+)</text>
        <dbReference type="Rhea" id="RHEA:17905"/>
        <dbReference type="ChEBI" id="CHEBI:15378"/>
        <dbReference type="ChEBI" id="CHEBI:16659"/>
        <dbReference type="ChEBI" id="CHEBI:17180"/>
        <dbReference type="ChEBI" id="CHEBI:57540"/>
        <dbReference type="ChEBI" id="CHEBI:57945"/>
        <dbReference type="EC" id="1.1.1.81"/>
    </reaction>
</comment>
<comment type="biophysicochemical properties">
    <kinetics>
        <KM evidence="2">0.14 mM for hydroxypyruvate</KM>
        <text evidence="2">kcat is 61 sec(-1).</text>
    </kinetics>
</comment>
<comment type="pathway">
    <text evidence="2">Carbohydrate metabolism.</text>
</comment>
<comment type="similarity">
    <text evidence="5">Belongs to the D-isomer specific 2-hydroxyacid dehydrogenase family.</text>
</comment>
<organism>
    <name type="scientific">Blautia hydrogenotrophica (strain DSM 10507 / JCM 14656 / S5a33)</name>
    <name type="common">Ruminococcus hydrogenotrophicus</name>
    <dbReference type="NCBI Taxonomy" id="476272"/>
    <lineage>
        <taxon>Bacteria</taxon>
        <taxon>Bacillati</taxon>
        <taxon>Bacillota</taxon>
        <taxon>Clostridia</taxon>
        <taxon>Lachnospirales</taxon>
        <taxon>Lachnospiraceae</taxon>
        <taxon>Blautia</taxon>
    </lineage>
</organism>
<keyword id="KW-0119">Carbohydrate metabolism</keyword>
<keyword id="KW-0520">NAD</keyword>
<keyword id="KW-0547">Nucleotide-binding</keyword>
<keyword id="KW-0560">Oxidoreductase</keyword>
<keyword id="KW-1185">Reference proteome</keyword>